<comment type="function">
    <text evidence="1">Catalyzes the condensation of (S)-aspartate-beta-semialdehyde [(S)-ASA] and pyruvate to 4-hydroxy-tetrahydrodipicolinate (HTPA).</text>
</comment>
<comment type="catalytic activity">
    <reaction evidence="1">
        <text>L-aspartate 4-semialdehyde + pyruvate = (2S,4S)-4-hydroxy-2,3,4,5-tetrahydrodipicolinate + H2O + H(+)</text>
        <dbReference type="Rhea" id="RHEA:34171"/>
        <dbReference type="ChEBI" id="CHEBI:15361"/>
        <dbReference type="ChEBI" id="CHEBI:15377"/>
        <dbReference type="ChEBI" id="CHEBI:15378"/>
        <dbReference type="ChEBI" id="CHEBI:67139"/>
        <dbReference type="ChEBI" id="CHEBI:537519"/>
        <dbReference type="EC" id="4.3.3.7"/>
    </reaction>
</comment>
<comment type="pathway">
    <text evidence="1">Amino-acid biosynthesis; L-lysine biosynthesis via DAP pathway; (S)-tetrahydrodipicolinate from L-aspartate: step 3/4.</text>
</comment>
<comment type="subunit">
    <text evidence="1">Homotetramer; dimer of dimers.</text>
</comment>
<comment type="subcellular location">
    <subcellularLocation>
        <location evidence="1">Cytoplasm</location>
    </subcellularLocation>
</comment>
<comment type="similarity">
    <text evidence="1">Belongs to the DapA family.</text>
</comment>
<comment type="caution">
    <text evidence="2">Was originally thought to be a dihydrodipicolinate synthase (DHDPS), catalyzing the condensation of (S)-aspartate-beta-semialdehyde [(S)-ASA] and pyruvate to dihydrodipicolinate (DHDP). However, it was shown in E.coli that the product of the enzymatic reaction is not dihydrodipicolinate but in fact (4S)-4-hydroxy-2,3,4,5-tetrahydro-(2S)-dipicolinic acid (HTPA), and that the consecutive dehydration reaction leading to DHDP is not spontaneous but catalyzed by DapB.</text>
</comment>
<proteinExistence type="inferred from homology"/>
<reference key="1">
    <citation type="journal article" date="2009" name="PLoS Genet.">
        <title>Organised genome dynamics in the Escherichia coli species results in highly diverse adaptive paths.</title>
        <authorList>
            <person name="Touchon M."/>
            <person name="Hoede C."/>
            <person name="Tenaillon O."/>
            <person name="Barbe V."/>
            <person name="Baeriswyl S."/>
            <person name="Bidet P."/>
            <person name="Bingen E."/>
            <person name="Bonacorsi S."/>
            <person name="Bouchier C."/>
            <person name="Bouvet O."/>
            <person name="Calteau A."/>
            <person name="Chiapello H."/>
            <person name="Clermont O."/>
            <person name="Cruveiller S."/>
            <person name="Danchin A."/>
            <person name="Diard M."/>
            <person name="Dossat C."/>
            <person name="Karoui M.E."/>
            <person name="Frapy E."/>
            <person name="Garry L."/>
            <person name="Ghigo J.M."/>
            <person name="Gilles A.M."/>
            <person name="Johnson J."/>
            <person name="Le Bouguenec C."/>
            <person name="Lescat M."/>
            <person name="Mangenot S."/>
            <person name="Martinez-Jehanne V."/>
            <person name="Matic I."/>
            <person name="Nassif X."/>
            <person name="Oztas S."/>
            <person name="Petit M.A."/>
            <person name="Pichon C."/>
            <person name="Rouy Z."/>
            <person name="Ruf C.S."/>
            <person name="Schneider D."/>
            <person name="Tourret J."/>
            <person name="Vacherie B."/>
            <person name="Vallenet D."/>
            <person name="Medigue C."/>
            <person name="Rocha E.P.C."/>
            <person name="Denamur E."/>
        </authorList>
    </citation>
    <scope>NUCLEOTIDE SEQUENCE [LARGE SCALE GENOMIC DNA]</scope>
    <source>
        <strain>ATCC 35469 / DSM 13698 / BCRC 15582 / CCUG 18766 / IAM 14443 / JCM 21226 / LMG 7866 / NBRC 102419 / NCTC 12128 / CDC 0568-73</strain>
    </source>
</reference>
<gene>
    <name evidence="1" type="primary">dapA</name>
    <name type="ordered locus">EFER_0697</name>
</gene>
<accession>B7LKG3</accession>
<dbReference type="EC" id="4.3.3.7" evidence="1"/>
<dbReference type="EMBL" id="CU928158">
    <property type="protein sequence ID" value="CAQ88240.1"/>
    <property type="molecule type" value="Genomic_DNA"/>
</dbReference>
<dbReference type="RefSeq" id="WP_000494011.1">
    <property type="nucleotide sequence ID" value="NC_011740.1"/>
</dbReference>
<dbReference type="SMR" id="B7LKG3"/>
<dbReference type="GeneID" id="75058243"/>
<dbReference type="KEGG" id="efe:EFER_0697"/>
<dbReference type="HOGENOM" id="CLU_049343_7_1_6"/>
<dbReference type="OrthoDB" id="9782828at2"/>
<dbReference type="UniPathway" id="UPA00034">
    <property type="reaction ID" value="UER00017"/>
</dbReference>
<dbReference type="Proteomes" id="UP000000745">
    <property type="component" value="Chromosome"/>
</dbReference>
<dbReference type="GO" id="GO:0005829">
    <property type="term" value="C:cytosol"/>
    <property type="evidence" value="ECO:0007669"/>
    <property type="project" value="TreeGrafter"/>
</dbReference>
<dbReference type="GO" id="GO:0008840">
    <property type="term" value="F:4-hydroxy-tetrahydrodipicolinate synthase activity"/>
    <property type="evidence" value="ECO:0007669"/>
    <property type="project" value="UniProtKB-UniRule"/>
</dbReference>
<dbReference type="GO" id="GO:0019877">
    <property type="term" value="P:diaminopimelate biosynthetic process"/>
    <property type="evidence" value="ECO:0007669"/>
    <property type="project" value="UniProtKB-UniRule"/>
</dbReference>
<dbReference type="GO" id="GO:0009089">
    <property type="term" value="P:lysine biosynthetic process via diaminopimelate"/>
    <property type="evidence" value="ECO:0007669"/>
    <property type="project" value="UniProtKB-UniRule"/>
</dbReference>
<dbReference type="CDD" id="cd00950">
    <property type="entry name" value="DHDPS"/>
    <property type="match status" value="1"/>
</dbReference>
<dbReference type="FunFam" id="3.20.20.70:FF:000046">
    <property type="entry name" value="4-hydroxy-tetrahydrodipicolinate synthase"/>
    <property type="match status" value="1"/>
</dbReference>
<dbReference type="Gene3D" id="3.20.20.70">
    <property type="entry name" value="Aldolase class I"/>
    <property type="match status" value="1"/>
</dbReference>
<dbReference type="HAMAP" id="MF_00418">
    <property type="entry name" value="DapA"/>
    <property type="match status" value="1"/>
</dbReference>
<dbReference type="InterPro" id="IPR013785">
    <property type="entry name" value="Aldolase_TIM"/>
</dbReference>
<dbReference type="InterPro" id="IPR005263">
    <property type="entry name" value="DapA"/>
</dbReference>
<dbReference type="InterPro" id="IPR002220">
    <property type="entry name" value="DapA-like"/>
</dbReference>
<dbReference type="InterPro" id="IPR020625">
    <property type="entry name" value="Schiff_base-form_aldolases_AS"/>
</dbReference>
<dbReference type="InterPro" id="IPR020624">
    <property type="entry name" value="Schiff_base-form_aldolases_CS"/>
</dbReference>
<dbReference type="NCBIfam" id="TIGR00674">
    <property type="entry name" value="dapA"/>
    <property type="match status" value="1"/>
</dbReference>
<dbReference type="PANTHER" id="PTHR12128:SF66">
    <property type="entry name" value="4-HYDROXY-2-OXOGLUTARATE ALDOLASE, MITOCHONDRIAL"/>
    <property type="match status" value="1"/>
</dbReference>
<dbReference type="PANTHER" id="PTHR12128">
    <property type="entry name" value="DIHYDRODIPICOLINATE SYNTHASE"/>
    <property type="match status" value="1"/>
</dbReference>
<dbReference type="Pfam" id="PF00701">
    <property type="entry name" value="DHDPS"/>
    <property type="match status" value="1"/>
</dbReference>
<dbReference type="PIRSF" id="PIRSF001365">
    <property type="entry name" value="DHDPS"/>
    <property type="match status" value="1"/>
</dbReference>
<dbReference type="PRINTS" id="PR00146">
    <property type="entry name" value="DHPICSNTHASE"/>
</dbReference>
<dbReference type="SMART" id="SM01130">
    <property type="entry name" value="DHDPS"/>
    <property type="match status" value="1"/>
</dbReference>
<dbReference type="SUPFAM" id="SSF51569">
    <property type="entry name" value="Aldolase"/>
    <property type="match status" value="1"/>
</dbReference>
<dbReference type="PROSITE" id="PS00665">
    <property type="entry name" value="DHDPS_1"/>
    <property type="match status" value="1"/>
</dbReference>
<dbReference type="PROSITE" id="PS00666">
    <property type="entry name" value="DHDPS_2"/>
    <property type="match status" value="1"/>
</dbReference>
<organism>
    <name type="scientific">Escherichia fergusonii (strain ATCC 35469 / DSM 13698 / CCUG 18766 / IAM 14443 / JCM 21226 / LMG 7866 / NBRC 102419 / NCTC 12128 / CDC 0568-73)</name>
    <dbReference type="NCBI Taxonomy" id="585054"/>
    <lineage>
        <taxon>Bacteria</taxon>
        <taxon>Pseudomonadati</taxon>
        <taxon>Pseudomonadota</taxon>
        <taxon>Gammaproteobacteria</taxon>
        <taxon>Enterobacterales</taxon>
        <taxon>Enterobacteriaceae</taxon>
        <taxon>Escherichia</taxon>
    </lineage>
</organism>
<protein>
    <recommendedName>
        <fullName evidence="1">4-hydroxy-tetrahydrodipicolinate synthase</fullName>
        <shortName evidence="1">HTPA synthase</shortName>
        <ecNumber evidence="1">4.3.3.7</ecNumber>
    </recommendedName>
</protein>
<sequence length="292" mass="31317">MFTGSIVALVTPMDDKGNVCRSSLKKLIDYHVASGTSAIVSVGTTGESATLSHDEHGDVVMMTLELADGRIPVIAGTGANATAEAISLTQRFNDSGVVGCLTVTPYYNRPTQEGLYQHFKAIAEHTDLPQILYNVPSRTGCDMLPETVGRLAKVKNIVAIKEATGNLSRVHQIKELVSDDFLLLSGDDATGLDFMQLGGHGVISVTANVAARDMAEMCRLAAEGQFAEARVINQRLMPLHNKLFVEPNPIPVKWACKELGLVATDTLRLPMTPITDNGKEIVRAALKHAGLL</sequence>
<feature type="chain" id="PRO_1000124034" description="4-hydroxy-tetrahydrodipicolinate synthase">
    <location>
        <begin position="1"/>
        <end position="292"/>
    </location>
</feature>
<feature type="active site" description="Proton donor/acceptor" evidence="1">
    <location>
        <position position="133"/>
    </location>
</feature>
<feature type="active site" description="Schiff-base intermediate with substrate" evidence="1">
    <location>
        <position position="161"/>
    </location>
</feature>
<feature type="binding site" evidence="1">
    <location>
        <position position="45"/>
    </location>
    <ligand>
        <name>pyruvate</name>
        <dbReference type="ChEBI" id="CHEBI:15361"/>
    </ligand>
</feature>
<feature type="binding site" evidence="1">
    <location>
        <position position="203"/>
    </location>
    <ligand>
        <name>pyruvate</name>
        <dbReference type="ChEBI" id="CHEBI:15361"/>
    </ligand>
</feature>
<feature type="site" description="Part of a proton relay during catalysis" evidence="1">
    <location>
        <position position="44"/>
    </location>
</feature>
<feature type="site" description="Part of a proton relay during catalysis" evidence="1">
    <location>
        <position position="107"/>
    </location>
</feature>
<name>DAPA_ESCF3</name>
<evidence type="ECO:0000255" key="1">
    <source>
        <dbReference type="HAMAP-Rule" id="MF_00418"/>
    </source>
</evidence>
<evidence type="ECO:0000305" key="2"/>
<keyword id="KW-0028">Amino-acid biosynthesis</keyword>
<keyword id="KW-0963">Cytoplasm</keyword>
<keyword id="KW-0220">Diaminopimelate biosynthesis</keyword>
<keyword id="KW-0456">Lyase</keyword>
<keyword id="KW-0457">Lysine biosynthesis</keyword>
<keyword id="KW-0704">Schiff base</keyword>